<sequence length="175" mass="19812">MAAVSMSVALRQALWGRRVATVAAVSVSKVSTRSLSTSTWRLAQDQTRDTQLITVDEKLDITTITGVPEEHIKTRKARIFVPARNNMQSGVNNTKKWKMEFDTRERWENPLMGWASTADPLSNLVLTFSTKEDAVAFAEKNGWSYDVEERKVPKPKSKSYGANFSWNKRTRVSTK</sequence>
<gene>
    <name type="primary">NDUFS4</name>
</gene>
<proteinExistence type="evidence at protein level"/>
<evidence type="ECO:0000250" key="1">
    <source>
        <dbReference type="UniProtKB" id="O43181"/>
    </source>
</evidence>
<evidence type="ECO:0000256" key="2">
    <source>
        <dbReference type="SAM" id="MobiDB-lite"/>
    </source>
</evidence>
<evidence type="ECO:0000269" key="3">
    <source>
    </source>
</evidence>
<evidence type="ECO:0000269" key="4">
    <source>
    </source>
</evidence>
<evidence type="ECO:0000269" key="5">
    <source>
    </source>
</evidence>
<evidence type="ECO:0000269" key="6">
    <source>
    </source>
</evidence>
<evidence type="ECO:0000305" key="7"/>
<evidence type="ECO:0007829" key="8">
    <source>
        <dbReference type="PDB" id="7QSM"/>
    </source>
</evidence>
<name>NDUS4_BOVIN</name>
<accession>Q02375</accession>
<protein>
    <recommendedName>
        <fullName>NADH dehydrogenase [ubiquinone] iron-sulfur protein 4, mitochondrial</fullName>
    </recommendedName>
    <alternativeName>
        <fullName>Complex I-18 kDa</fullName>
        <shortName>CI-18 kDa</shortName>
    </alternativeName>
    <alternativeName>
        <fullName>Complex I-AQDQ</fullName>
        <shortName>CI-AQDQ</shortName>
    </alternativeName>
    <alternativeName>
        <fullName>NADH-ubiquinone oxidoreductase 18 kDa subunit</fullName>
    </alternativeName>
</protein>
<comment type="function">
    <text evidence="3 4">Accessory subunit of the mitochondrial membrane respiratory chain NADH dehydrogenase (Complex I), that is believed not to be involved in catalysis. Complex I functions in the transfer of electrons from NADH to the respiratory chain. The immediate electron acceptor for the enzyme is believed to be ubiquinone.</text>
</comment>
<comment type="subunit">
    <text evidence="1 3 4">Mammalian complex I is composed of 45 different subunits. This is a component of the iron-sulfur (IP) fragment of the enzyme (PubMed:10852722, PubMed:18721790). Interacts with BCAP31 and TOMM40; the interaction mediates its translocation to the mitochondria; the interaction with BCAP31 is direct (By similarity).</text>
</comment>
<comment type="subcellular location">
    <subcellularLocation>
        <location evidence="3 4">Mitochondrion inner membrane</location>
        <topology evidence="3 4">Peripheral membrane protein</topology>
        <orientation evidence="3 4">Matrix side</orientation>
    </subcellularLocation>
    <text evidence="1">The interaction with BCAP31 mediates mitochondria localization.</text>
</comment>
<comment type="PTM">
    <text evidence="6">Phosphorylated.</text>
</comment>
<comment type="similarity">
    <text evidence="7">Belongs to the complex I NDUFS4 subunit family.</text>
</comment>
<keyword id="KW-0002">3D-structure</keyword>
<keyword id="KW-0903">Direct protein sequencing</keyword>
<keyword id="KW-0249">Electron transport</keyword>
<keyword id="KW-0472">Membrane</keyword>
<keyword id="KW-0496">Mitochondrion</keyword>
<keyword id="KW-0999">Mitochondrion inner membrane</keyword>
<keyword id="KW-0597">Phosphoprotein</keyword>
<keyword id="KW-1185">Reference proteome</keyword>
<keyword id="KW-0679">Respiratory chain</keyword>
<keyword id="KW-0809">Transit peptide</keyword>
<keyword id="KW-0813">Transport</keyword>
<feature type="transit peptide" description="Mitochondrion">
    <location>
        <begin position="1"/>
        <end position="42"/>
    </location>
</feature>
<feature type="chain" id="PRO_0000020037" description="NADH dehydrogenase [ubiquinone] iron-sulfur protein 4, mitochondrial">
    <location>
        <begin position="43"/>
        <end position="175"/>
    </location>
</feature>
<feature type="region of interest" description="Disordered" evidence="2">
    <location>
        <begin position="149"/>
        <end position="175"/>
    </location>
</feature>
<feature type="modified residue" description="Phosphoserine" evidence="5">
    <location>
        <position position="173"/>
    </location>
</feature>
<feature type="helix" evidence="8">
    <location>
        <begin position="62"/>
        <end position="64"/>
    </location>
</feature>
<feature type="helix" evidence="8">
    <location>
        <begin position="70"/>
        <end position="73"/>
    </location>
</feature>
<feature type="strand" evidence="8">
    <location>
        <begin position="76"/>
        <end position="80"/>
    </location>
</feature>
<feature type="helix" evidence="8">
    <location>
        <begin position="92"/>
        <end position="94"/>
    </location>
</feature>
<feature type="strand" evidence="8">
    <location>
        <begin position="95"/>
        <end position="101"/>
    </location>
</feature>
<feature type="strand" evidence="8">
    <location>
        <begin position="106"/>
        <end position="108"/>
    </location>
</feature>
<feature type="turn" evidence="8">
    <location>
        <begin position="110"/>
        <end position="112"/>
    </location>
</feature>
<feature type="strand" evidence="8">
    <location>
        <begin position="115"/>
        <end position="117"/>
    </location>
</feature>
<feature type="turn" evidence="8">
    <location>
        <begin position="120"/>
        <end position="123"/>
    </location>
</feature>
<feature type="strand" evidence="8">
    <location>
        <begin position="126"/>
        <end position="130"/>
    </location>
</feature>
<feature type="helix" evidence="8">
    <location>
        <begin position="131"/>
        <end position="140"/>
    </location>
</feature>
<feature type="strand" evidence="8">
    <location>
        <begin position="144"/>
        <end position="147"/>
    </location>
</feature>
<feature type="helix" evidence="8">
    <location>
        <begin position="161"/>
        <end position="164"/>
    </location>
</feature>
<feature type="strand" evidence="8">
    <location>
        <begin position="166"/>
        <end position="168"/>
    </location>
</feature>
<reference key="1">
    <citation type="journal article" date="1992" name="J. Mol. Biol.">
        <title>Sequences of 20 subunits of NADH:ubiquinone oxidoreductase from bovine heart mitochondria. Application of a novel strategy for sequencing proteins using the polymerase chain reaction.</title>
        <authorList>
            <person name="Walker J.E."/>
            <person name="Arizmendi J.M."/>
            <person name="Dupuis A."/>
            <person name="Fearnley I.M."/>
            <person name="Finel M."/>
            <person name="Medd S.M."/>
            <person name="Pilkington S.J."/>
            <person name="Runswick M.J."/>
            <person name="Skehel J.M."/>
        </authorList>
    </citation>
    <scope>NUCLEOTIDE SEQUENCE [MRNA]</scope>
    <scope>PARTIAL PROTEIN SEQUENCE</scope>
    <source>
        <tissue>Heart</tissue>
    </source>
</reference>
<reference key="2">
    <citation type="journal article" date="1996" name="FEBS Lett.">
        <title>The nuclear-encoded 18 kDa (IP) AQDQ subunit of bovine heart complex I is phosphorylated by the mitochondrial cAMP-dependent protein kinase.</title>
        <authorList>
            <person name="Papa S."/>
            <person name="Sardanelli A.M."/>
            <person name="Cocco T."/>
            <person name="Speranza F."/>
            <person name="Scacco S.C."/>
            <person name="Technikova-Dobrova Z."/>
        </authorList>
    </citation>
    <scope>PHOSPHORYLATION</scope>
</reference>
<reference key="3">
    <citation type="journal article" date="2000" name="Biochemistry">
        <title>Resolution of the membrane domain of bovine complex I into subcomplexes: implications for the structural organization of the enzyme.</title>
        <authorList>
            <person name="Sazanov L.A."/>
            <person name="Peak-Chew S.Y."/>
            <person name="Fearnley I.M."/>
            <person name="Walker J.E."/>
        </authorList>
    </citation>
    <scope>PARTIAL PROTEIN SEQUENCE</scope>
    <scope>FUNCTION</scope>
    <scope>SUBUNIT</scope>
    <scope>IDENTIFICATION IN COMPLEX I</scope>
</reference>
<reference key="4">
    <citation type="journal article" date="2008" name="Anal. Biochem.">
        <title>Subunit analysis of bovine heart complex I by reversed-phase high-performance liquid chromatography, electrospray ionization-tandem mass spectrometry, and matrix-assisted laser desorption/ionization-time-of-flight mass spectrometry.</title>
        <authorList>
            <person name="Lemma-Gray P."/>
            <person name="Valusova E."/>
            <person name="Carroll C.A."/>
            <person name="Weintraub S.T."/>
            <person name="Musatov A."/>
            <person name="Robinson N.C."/>
        </authorList>
    </citation>
    <scope>SUBUNIT</scope>
    <scope>IDENTIFICATION IN COMPLEX I</scope>
    <scope>FUNCTION</scope>
</reference>
<reference key="5">
    <citation type="journal article" date="2010" name="Mitochondrion">
        <title>Phosphorylation pattern of the NDUFS4 subunit of complex I of the mammalian respiratory chain.</title>
        <authorList>
            <person name="De Rasmo D."/>
            <person name="Palmisano G."/>
            <person name="Scacco S."/>
            <person name="Technikova-Dobrova Z."/>
            <person name="Panelli D."/>
            <person name="Cocco T."/>
            <person name="Sardanelli A.M."/>
            <person name="Gnoni A."/>
            <person name="Micelli L."/>
            <person name="Trani A."/>
            <person name="Di Luccia A."/>
            <person name="Papa S."/>
        </authorList>
    </citation>
    <scope>PHOSPHORYLATION AT SER-173</scope>
</reference>
<organism>
    <name type="scientific">Bos taurus</name>
    <name type="common">Bovine</name>
    <dbReference type="NCBI Taxonomy" id="9913"/>
    <lineage>
        <taxon>Eukaryota</taxon>
        <taxon>Metazoa</taxon>
        <taxon>Chordata</taxon>
        <taxon>Craniata</taxon>
        <taxon>Vertebrata</taxon>
        <taxon>Euteleostomi</taxon>
        <taxon>Mammalia</taxon>
        <taxon>Eutheria</taxon>
        <taxon>Laurasiatheria</taxon>
        <taxon>Artiodactyla</taxon>
        <taxon>Ruminantia</taxon>
        <taxon>Pecora</taxon>
        <taxon>Bovidae</taxon>
        <taxon>Bovinae</taxon>
        <taxon>Bos</taxon>
    </lineage>
</organism>
<dbReference type="EMBL" id="X63215">
    <property type="protein sequence ID" value="CAA44900.1"/>
    <property type="molecule type" value="mRNA"/>
</dbReference>
<dbReference type="PIR" id="S28240">
    <property type="entry name" value="S28240"/>
</dbReference>
<dbReference type="RefSeq" id="NP_786994.1">
    <property type="nucleotide sequence ID" value="NM_175800.2"/>
</dbReference>
<dbReference type="PDB" id="5O31">
    <property type="method" value="EM"/>
    <property type="resolution" value="4.13 A"/>
    <property type="chains" value="Q=43-175"/>
</dbReference>
<dbReference type="PDB" id="7DGQ">
    <property type="method" value="EM"/>
    <property type="resolution" value="5.00 A"/>
    <property type="chains" value="G=43-175"/>
</dbReference>
<dbReference type="PDB" id="7DGR">
    <property type="method" value="EM"/>
    <property type="resolution" value="4.60 A"/>
    <property type="chains" value="G=43-175"/>
</dbReference>
<dbReference type="PDB" id="7DGS">
    <property type="method" value="EM"/>
    <property type="resolution" value="7.80 A"/>
    <property type="chains" value="G=43-175"/>
</dbReference>
<dbReference type="PDB" id="7DGZ">
    <property type="method" value="EM"/>
    <property type="resolution" value="3.80 A"/>
    <property type="chains" value="G=43-175"/>
</dbReference>
<dbReference type="PDB" id="7DH0">
    <property type="method" value="EM"/>
    <property type="resolution" value="4.20 A"/>
    <property type="chains" value="G=43-175"/>
</dbReference>
<dbReference type="PDB" id="7DKF">
    <property type="method" value="EM"/>
    <property type="resolution" value="8.30 A"/>
    <property type="chains" value="G2=43-175"/>
</dbReference>
<dbReference type="PDB" id="7QSD">
    <property type="method" value="EM"/>
    <property type="resolution" value="3.10 A"/>
    <property type="chains" value="Q=1-175"/>
</dbReference>
<dbReference type="PDB" id="7QSK">
    <property type="method" value="EM"/>
    <property type="resolution" value="2.84 A"/>
    <property type="chains" value="Q=1-175"/>
</dbReference>
<dbReference type="PDB" id="7QSL">
    <property type="method" value="EM"/>
    <property type="resolution" value="2.76 A"/>
    <property type="chains" value="Q=1-175"/>
</dbReference>
<dbReference type="PDB" id="7QSM">
    <property type="method" value="EM"/>
    <property type="resolution" value="2.30 A"/>
    <property type="chains" value="Q=1-175"/>
</dbReference>
<dbReference type="PDB" id="7QSN">
    <property type="method" value="EM"/>
    <property type="resolution" value="2.81 A"/>
    <property type="chains" value="Q=1-175"/>
</dbReference>
<dbReference type="PDB" id="7QSO">
    <property type="method" value="EM"/>
    <property type="resolution" value="3.02 A"/>
    <property type="chains" value="Q=1-175"/>
</dbReference>
<dbReference type="PDB" id="7R41">
    <property type="method" value="EM"/>
    <property type="resolution" value="2.30 A"/>
    <property type="chains" value="Q=1-175"/>
</dbReference>
<dbReference type="PDB" id="7R42">
    <property type="method" value="EM"/>
    <property type="resolution" value="2.30 A"/>
    <property type="chains" value="Q=1-175"/>
</dbReference>
<dbReference type="PDB" id="7R43">
    <property type="method" value="EM"/>
    <property type="resolution" value="2.40 A"/>
    <property type="chains" value="Q=1-175"/>
</dbReference>
<dbReference type="PDB" id="7R44">
    <property type="method" value="EM"/>
    <property type="resolution" value="2.40 A"/>
    <property type="chains" value="Q=1-175"/>
</dbReference>
<dbReference type="PDB" id="7R45">
    <property type="method" value="EM"/>
    <property type="resolution" value="2.40 A"/>
    <property type="chains" value="Q=1-175"/>
</dbReference>
<dbReference type="PDB" id="7R46">
    <property type="method" value="EM"/>
    <property type="resolution" value="2.40 A"/>
    <property type="chains" value="Q=1-175"/>
</dbReference>
<dbReference type="PDB" id="7R47">
    <property type="method" value="EM"/>
    <property type="resolution" value="2.30 A"/>
    <property type="chains" value="Q=1-175"/>
</dbReference>
<dbReference type="PDB" id="7R48">
    <property type="method" value="EM"/>
    <property type="resolution" value="2.30 A"/>
    <property type="chains" value="Q=1-175"/>
</dbReference>
<dbReference type="PDB" id="7R4C">
    <property type="method" value="EM"/>
    <property type="resolution" value="2.30 A"/>
    <property type="chains" value="Q=1-175"/>
</dbReference>
<dbReference type="PDB" id="7R4D">
    <property type="method" value="EM"/>
    <property type="resolution" value="2.30 A"/>
    <property type="chains" value="Q=1-175"/>
</dbReference>
<dbReference type="PDB" id="7R4F">
    <property type="method" value="EM"/>
    <property type="resolution" value="2.40 A"/>
    <property type="chains" value="Q=1-175"/>
</dbReference>
<dbReference type="PDB" id="7R4G">
    <property type="method" value="EM"/>
    <property type="resolution" value="2.50 A"/>
    <property type="chains" value="Q=1-175"/>
</dbReference>
<dbReference type="PDB" id="8Q0A">
    <property type="method" value="EM"/>
    <property type="resolution" value="3.10 A"/>
    <property type="chains" value="Q=1-175"/>
</dbReference>
<dbReference type="PDB" id="8Q0F">
    <property type="method" value="EM"/>
    <property type="resolution" value="3.10 A"/>
    <property type="chains" value="Q=1-175"/>
</dbReference>
<dbReference type="PDB" id="8Q0J">
    <property type="method" value="EM"/>
    <property type="resolution" value="3.80 A"/>
    <property type="chains" value="Q=1-175"/>
</dbReference>
<dbReference type="PDB" id="8Q0M">
    <property type="method" value="EM"/>
    <property type="resolution" value="3.10 A"/>
    <property type="chains" value="Q=1-175"/>
</dbReference>
<dbReference type="PDB" id="8Q0O">
    <property type="method" value="EM"/>
    <property type="resolution" value="3.10 A"/>
    <property type="chains" value="Q=1-175"/>
</dbReference>
<dbReference type="PDB" id="8Q0Q">
    <property type="method" value="EM"/>
    <property type="resolution" value="3.60 A"/>
    <property type="chains" value="Q=1-175"/>
</dbReference>
<dbReference type="PDB" id="8Q1P">
    <property type="method" value="EM"/>
    <property type="resolution" value="2.90 A"/>
    <property type="chains" value="Q=1-175"/>
</dbReference>
<dbReference type="PDB" id="8Q1U">
    <property type="method" value="EM"/>
    <property type="resolution" value="3.30 A"/>
    <property type="chains" value="Q=1-175"/>
</dbReference>
<dbReference type="PDB" id="8Q1Y">
    <property type="method" value="EM"/>
    <property type="resolution" value="2.60 A"/>
    <property type="chains" value="Q=1-175"/>
</dbReference>
<dbReference type="PDB" id="8Q25">
    <property type="method" value="EM"/>
    <property type="resolution" value="2.80 A"/>
    <property type="chains" value="Q=1-175"/>
</dbReference>
<dbReference type="PDB" id="8Q45">
    <property type="method" value="EM"/>
    <property type="resolution" value="2.70 A"/>
    <property type="chains" value="Q=1-175"/>
</dbReference>
<dbReference type="PDB" id="8Q46">
    <property type="method" value="EM"/>
    <property type="resolution" value="2.60 A"/>
    <property type="chains" value="Q=1-175"/>
</dbReference>
<dbReference type="PDB" id="8Q47">
    <property type="method" value="EM"/>
    <property type="resolution" value="2.90 A"/>
    <property type="chains" value="Q=1-175"/>
</dbReference>
<dbReference type="PDB" id="8Q48">
    <property type="method" value="EM"/>
    <property type="resolution" value="2.50 A"/>
    <property type="chains" value="Q=1-175"/>
</dbReference>
<dbReference type="PDB" id="8Q49">
    <property type="method" value="EM"/>
    <property type="resolution" value="2.60 A"/>
    <property type="chains" value="Q=1-175"/>
</dbReference>
<dbReference type="PDB" id="8Q4A">
    <property type="method" value="EM"/>
    <property type="resolution" value="2.60 A"/>
    <property type="chains" value="Q=1-175"/>
</dbReference>
<dbReference type="PDBsum" id="5O31"/>
<dbReference type="PDBsum" id="7DGQ"/>
<dbReference type="PDBsum" id="7DGR"/>
<dbReference type="PDBsum" id="7DGS"/>
<dbReference type="PDBsum" id="7DGZ"/>
<dbReference type="PDBsum" id="7DH0"/>
<dbReference type="PDBsum" id="7DKF"/>
<dbReference type="PDBsum" id="7QSD"/>
<dbReference type="PDBsum" id="7QSK"/>
<dbReference type="PDBsum" id="7QSL"/>
<dbReference type="PDBsum" id="7QSM"/>
<dbReference type="PDBsum" id="7QSN"/>
<dbReference type="PDBsum" id="7QSO"/>
<dbReference type="PDBsum" id="7R41"/>
<dbReference type="PDBsum" id="7R42"/>
<dbReference type="PDBsum" id="7R43"/>
<dbReference type="PDBsum" id="7R44"/>
<dbReference type="PDBsum" id="7R45"/>
<dbReference type="PDBsum" id="7R46"/>
<dbReference type="PDBsum" id="7R47"/>
<dbReference type="PDBsum" id="7R48"/>
<dbReference type="PDBsum" id="7R4C"/>
<dbReference type="PDBsum" id="7R4D"/>
<dbReference type="PDBsum" id="7R4F"/>
<dbReference type="PDBsum" id="7R4G"/>
<dbReference type="PDBsum" id="8Q0A"/>
<dbReference type="PDBsum" id="8Q0F"/>
<dbReference type="PDBsum" id="8Q0J"/>
<dbReference type="PDBsum" id="8Q0M"/>
<dbReference type="PDBsum" id="8Q0O"/>
<dbReference type="PDBsum" id="8Q0Q"/>
<dbReference type="PDBsum" id="8Q1P"/>
<dbReference type="PDBsum" id="8Q1U"/>
<dbReference type="PDBsum" id="8Q1Y"/>
<dbReference type="PDBsum" id="8Q25"/>
<dbReference type="PDBsum" id="8Q45"/>
<dbReference type="PDBsum" id="8Q46"/>
<dbReference type="PDBsum" id="8Q47"/>
<dbReference type="PDBsum" id="8Q48"/>
<dbReference type="PDBsum" id="8Q49"/>
<dbReference type="PDBsum" id="8Q4A"/>
<dbReference type="EMDB" id="EMD-14127"/>
<dbReference type="EMDB" id="EMD-14132"/>
<dbReference type="EMDB" id="EMD-14133"/>
<dbReference type="EMDB" id="EMD-14134"/>
<dbReference type="EMDB" id="EMD-14139"/>
<dbReference type="EMDB" id="EMD-14140"/>
<dbReference type="EMDB" id="EMD-14251"/>
<dbReference type="EMDB" id="EMD-14256"/>
<dbReference type="EMDB" id="EMD-14261"/>
<dbReference type="EMDB" id="EMD-14266"/>
<dbReference type="EMDB" id="EMD-14272"/>
<dbReference type="EMDB" id="EMD-14277"/>
<dbReference type="EMDB" id="EMD-14282"/>
<dbReference type="EMDB" id="EMD-14287"/>
<dbReference type="EMDB" id="EMD-14292"/>
<dbReference type="EMDB" id="EMD-14297"/>
<dbReference type="EMDB" id="EMD-14302"/>
<dbReference type="EMDB" id="EMD-14307"/>
<dbReference type="EMDB" id="EMD-18051"/>
<dbReference type="EMDB" id="EMD-18052"/>
<dbReference type="EMDB" id="EMD-18054"/>
<dbReference type="EMDB" id="EMD-18055"/>
<dbReference type="EMDB" id="EMD-18057"/>
<dbReference type="EMDB" id="EMD-18059"/>
<dbReference type="EMDB" id="EMD-18066"/>
<dbReference type="EMDB" id="EMD-18067"/>
<dbReference type="EMDB" id="EMD-18068"/>
<dbReference type="EMDB" id="EMD-18069"/>
<dbReference type="EMDB" id="EMD-18138"/>
<dbReference type="EMDB" id="EMD-18139"/>
<dbReference type="EMDB" id="EMD-18140"/>
<dbReference type="EMDB" id="EMD-18141"/>
<dbReference type="EMDB" id="EMD-18142"/>
<dbReference type="EMDB" id="EMD-18143"/>
<dbReference type="EMDB" id="EMD-30673"/>
<dbReference type="EMDB" id="EMD-30674"/>
<dbReference type="EMDB" id="EMD-30675"/>
<dbReference type="EMDB" id="EMD-30676"/>
<dbReference type="EMDB" id="EMD-30677"/>
<dbReference type="EMDB" id="EMD-30706"/>
<dbReference type="EMDB" id="EMD-3731"/>
<dbReference type="SMR" id="Q02375"/>
<dbReference type="CORUM" id="Q02375"/>
<dbReference type="DIP" id="DIP-38808N"/>
<dbReference type="FunCoup" id="Q02375">
    <property type="interactions" value="2956"/>
</dbReference>
<dbReference type="IntAct" id="Q02375">
    <property type="interactions" value="3"/>
</dbReference>
<dbReference type="STRING" id="9913.ENSBTAP00000044670"/>
<dbReference type="TCDB" id="3.D.1.6.1">
    <property type="family name" value="the h+ or na+-translocating nadh dehydrogenase (ndh) family"/>
</dbReference>
<dbReference type="iPTMnet" id="Q02375"/>
<dbReference type="PaxDb" id="9913-ENSBTAP00000044670"/>
<dbReference type="PeptideAtlas" id="Q02375"/>
<dbReference type="Ensembl" id="ENSBTAT00000047463.5">
    <property type="protein sequence ID" value="ENSBTAP00000044670.3"/>
    <property type="gene ID" value="ENSBTAG00000003728.7"/>
</dbReference>
<dbReference type="GeneID" id="327680"/>
<dbReference type="KEGG" id="bta:327680"/>
<dbReference type="CTD" id="4724"/>
<dbReference type="VEuPathDB" id="HostDB:ENSBTAG00000003728"/>
<dbReference type="VGNC" id="VGNC:50229">
    <property type="gene designation" value="NDUFS4"/>
</dbReference>
<dbReference type="eggNOG" id="KOG3389">
    <property type="taxonomic scope" value="Eukaryota"/>
</dbReference>
<dbReference type="GeneTree" id="ENSGT00390000013835"/>
<dbReference type="HOGENOM" id="CLU_077196_3_0_1"/>
<dbReference type="InParanoid" id="Q02375"/>
<dbReference type="OMA" id="GTIMKFD"/>
<dbReference type="OrthoDB" id="3089at2759"/>
<dbReference type="TreeFam" id="TF105619"/>
<dbReference type="Reactome" id="R-BTA-611105">
    <property type="pathway name" value="Respiratory electron transport"/>
</dbReference>
<dbReference type="Reactome" id="R-BTA-6799198">
    <property type="pathway name" value="Complex I biogenesis"/>
</dbReference>
<dbReference type="Proteomes" id="UP000009136">
    <property type="component" value="Chromosome 20"/>
</dbReference>
<dbReference type="Bgee" id="ENSBTAG00000003728">
    <property type="expression patterns" value="Expressed in tongue muscle and 105 other cell types or tissues"/>
</dbReference>
<dbReference type="GO" id="GO:0005743">
    <property type="term" value="C:mitochondrial inner membrane"/>
    <property type="evidence" value="ECO:0007669"/>
    <property type="project" value="UniProtKB-SubCell"/>
</dbReference>
<dbReference type="GO" id="GO:0005739">
    <property type="term" value="C:mitochondrion"/>
    <property type="evidence" value="ECO:0000305"/>
    <property type="project" value="UniProtKB"/>
</dbReference>
<dbReference type="GO" id="GO:0045271">
    <property type="term" value="C:respiratory chain complex I"/>
    <property type="evidence" value="ECO:0000314"/>
    <property type="project" value="UniProtKB"/>
</dbReference>
<dbReference type="GO" id="GO:0008137">
    <property type="term" value="F:NADH dehydrogenase (ubiquinone) activity"/>
    <property type="evidence" value="ECO:0000250"/>
    <property type="project" value="AgBase"/>
</dbReference>
<dbReference type="GO" id="GO:0007420">
    <property type="term" value="P:brain development"/>
    <property type="evidence" value="ECO:0000250"/>
    <property type="project" value="AgBase"/>
</dbReference>
<dbReference type="GO" id="GO:0022900">
    <property type="term" value="P:electron transport chain"/>
    <property type="evidence" value="ECO:0007669"/>
    <property type="project" value="InterPro"/>
</dbReference>
<dbReference type="GO" id="GO:0032981">
    <property type="term" value="P:mitochondrial respiratory chain complex I assembly"/>
    <property type="evidence" value="ECO:0000250"/>
    <property type="project" value="AgBase"/>
</dbReference>
<dbReference type="GO" id="GO:0072593">
    <property type="term" value="P:reactive oxygen species metabolic process"/>
    <property type="evidence" value="ECO:0000250"/>
    <property type="project" value="AgBase"/>
</dbReference>
<dbReference type="GO" id="GO:0051591">
    <property type="term" value="P:response to cAMP"/>
    <property type="evidence" value="ECO:0000250"/>
    <property type="project" value="AgBase"/>
</dbReference>
<dbReference type="FunFam" id="3.30.160.190:FF:000001">
    <property type="entry name" value="NADH-ubiquinone oxidoreductase 21 kDa subunit mitochondrial"/>
    <property type="match status" value="1"/>
</dbReference>
<dbReference type="Gene3D" id="3.30.160.190">
    <property type="entry name" value="atu1810 like domain"/>
    <property type="match status" value="1"/>
</dbReference>
<dbReference type="InterPro" id="IPR006885">
    <property type="entry name" value="NADH_UbQ_FeS_4_mit-like"/>
</dbReference>
<dbReference type="InterPro" id="IPR038532">
    <property type="entry name" value="NDUFS4-like_sf"/>
</dbReference>
<dbReference type="PANTHER" id="PTHR12219:SF28">
    <property type="entry name" value="NADH DEHYDROGENASE [UBIQUINONE] IRON-SULFUR PROTEIN 4, MITOCHONDRIAL"/>
    <property type="match status" value="1"/>
</dbReference>
<dbReference type="PANTHER" id="PTHR12219">
    <property type="entry name" value="NADH-UBIQUINONE OXIDOREDUCTASE"/>
    <property type="match status" value="1"/>
</dbReference>
<dbReference type="Pfam" id="PF04800">
    <property type="entry name" value="NDUS4"/>
    <property type="match status" value="1"/>
</dbReference>